<organism>
    <name type="scientific">Shewanella baltica (strain OS155 / ATCC BAA-1091)</name>
    <dbReference type="NCBI Taxonomy" id="325240"/>
    <lineage>
        <taxon>Bacteria</taxon>
        <taxon>Pseudomonadati</taxon>
        <taxon>Pseudomonadota</taxon>
        <taxon>Gammaproteobacteria</taxon>
        <taxon>Alteromonadales</taxon>
        <taxon>Shewanellaceae</taxon>
        <taxon>Shewanella</taxon>
    </lineage>
</organism>
<evidence type="ECO:0000255" key="1">
    <source>
        <dbReference type="HAMAP-Rule" id="MF_01552"/>
    </source>
</evidence>
<reference key="1">
    <citation type="submission" date="2007-02" db="EMBL/GenBank/DDBJ databases">
        <title>Complete sequence of chromosome of Shewanella baltica OS155.</title>
        <authorList>
            <consortium name="US DOE Joint Genome Institute"/>
            <person name="Copeland A."/>
            <person name="Lucas S."/>
            <person name="Lapidus A."/>
            <person name="Barry K."/>
            <person name="Detter J.C."/>
            <person name="Glavina del Rio T."/>
            <person name="Hammon N."/>
            <person name="Israni S."/>
            <person name="Dalin E."/>
            <person name="Tice H."/>
            <person name="Pitluck S."/>
            <person name="Sims D.R."/>
            <person name="Brettin T."/>
            <person name="Bruce D."/>
            <person name="Han C."/>
            <person name="Tapia R."/>
            <person name="Brainard J."/>
            <person name="Schmutz J."/>
            <person name="Larimer F."/>
            <person name="Land M."/>
            <person name="Hauser L."/>
            <person name="Kyrpides N."/>
            <person name="Mikhailova N."/>
            <person name="Brettar I."/>
            <person name="Klappenbach J."/>
            <person name="Konstantinidis K."/>
            <person name="Rodrigues J."/>
            <person name="Tiedje J."/>
            <person name="Richardson P."/>
        </authorList>
    </citation>
    <scope>NUCLEOTIDE SEQUENCE [LARGE SCALE GENOMIC DNA]</scope>
    <source>
        <strain>OS155 / ATCC BAA-1091</strain>
    </source>
</reference>
<comment type="cofactor">
    <cofactor evidence="1">
        <name>Mg(2+)</name>
        <dbReference type="ChEBI" id="CHEBI:18420"/>
    </cofactor>
    <cofactor evidence="1">
        <name>Mn(2+)</name>
        <dbReference type="ChEBI" id="CHEBI:29035"/>
    </cofactor>
    <text evidence="1">Binds 2 magnesium or manganese ions per subunit.</text>
</comment>
<comment type="similarity">
    <text evidence="1">Belongs to the RimK family.</text>
</comment>
<keyword id="KW-0067">ATP-binding</keyword>
<keyword id="KW-0436">Ligase</keyword>
<keyword id="KW-0460">Magnesium</keyword>
<keyword id="KW-0464">Manganese</keyword>
<keyword id="KW-0479">Metal-binding</keyword>
<keyword id="KW-0547">Nucleotide-binding</keyword>
<keyword id="KW-0648">Protein biosynthesis</keyword>
<keyword id="KW-1185">Reference proteome</keyword>
<dbReference type="EC" id="6.3.2.-" evidence="1"/>
<dbReference type="EMBL" id="CP000563">
    <property type="protein sequence ID" value="ABN61884.1"/>
    <property type="molecule type" value="Genomic_DNA"/>
</dbReference>
<dbReference type="SMR" id="A3D571"/>
<dbReference type="STRING" id="325240.Sbal_2391"/>
<dbReference type="KEGG" id="sbl:Sbal_2391"/>
<dbReference type="HOGENOM" id="CLU_054353_0_1_6"/>
<dbReference type="OrthoDB" id="3865600at2"/>
<dbReference type="Proteomes" id="UP000001557">
    <property type="component" value="Chromosome"/>
</dbReference>
<dbReference type="GO" id="GO:0005737">
    <property type="term" value="C:cytoplasm"/>
    <property type="evidence" value="ECO:0007669"/>
    <property type="project" value="TreeGrafter"/>
</dbReference>
<dbReference type="GO" id="GO:0005524">
    <property type="term" value="F:ATP binding"/>
    <property type="evidence" value="ECO:0007669"/>
    <property type="project" value="UniProtKB-UniRule"/>
</dbReference>
<dbReference type="GO" id="GO:0046872">
    <property type="term" value="F:metal ion binding"/>
    <property type="evidence" value="ECO:0007669"/>
    <property type="project" value="UniProtKB-KW"/>
</dbReference>
<dbReference type="GO" id="GO:0018169">
    <property type="term" value="F:ribosomal S6-glutamic acid ligase activity"/>
    <property type="evidence" value="ECO:0007669"/>
    <property type="project" value="TreeGrafter"/>
</dbReference>
<dbReference type="GO" id="GO:0036211">
    <property type="term" value="P:protein modification process"/>
    <property type="evidence" value="ECO:0007669"/>
    <property type="project" value="InterPro"/>
</dbReference>
<dbReference type="GO" id="GO:0009432">
    <property type="term" value="P:SOS response"/>
    <property type="evidence" value="ECO:0007669"/>
    <property type="project" value="TreeGrafter"/>
</dbReference>
<dbReference type="GO" id="GO:0006412">
    <property type="term" value="P:translation"/>
    <property type="evidence" value="ECO:0007669"/>
    <property type="project" value="UniProtKB-KW"/>
</dbReference>
<dbReference type="FunFam" id="3.40.50.20:FF:000004">
    <property type="entry name" value="Probable alpha-L-glutamate ligase"/>
    <property type="match status" value="1"/>
</dbReference>
<dbReference type="FunFam" id="3.30.1490.20:FF:000005">
    <property type="entry name" value="Probable alpha-L-glutamate ligase 1"/>
    <property type="match status" value="1"/>
</dbReference>
<dbReference type="FunFam" id="3.30.470.20:FF:000016">
    <property type="entry name" value="Ribosomal protein S6--L-glutamate ligase"/>
    <property type="match status" value="1"/>
</dbReference>
<dbReference type="Gene3D" id="3.40.50.20">
    <property type="match status" value="1"/>
</dbReference>
<dbReference type="Gene3D" id="3.30.1490.20">
    <property type="entry name" value="ATP-grasp fold, A domain"/>
    <property type="match status" value="1"/>
</dbReference>
<dbReference type="Gene3D" id="3.30.470.20">
    <property type="entry name" value="ATP-grasp fold, B domain"/>
    <property type="match status" value="1"/>
</dbReference>
<dbReference type="HAMAP" id="MF_01552">
    <property type="entry name" value="RimK"/>
    <property type="match status" value="1"/>
</dbReference>
<dbReference type="InterPro" id="IPR011761">
    <property type="entry name" value="ATP-grasp"/>
</dbReference>
<dbReference type="InterPro" id="IPR013651">
    <property type="entry name" value="ATP-grasp_RimK-type"/>
</dbReference>
<dbReference type="InterPro" id="IPR013815">
    <property type="entry name" value="ATP_grasp_subdomain_1"/>
</dbReference>
<dbReference type="InterPro" id="IPR023533">
    <property type="entry name" value="RimK"/>
</dbReference>
<dbReference type="InterPro" id="IPR041107">
    <property type="entry name" value="Rimk_N"/>
</dbReference>
<dbReference type="InterPro" id="IPR004666">
    <property type="entry name" value="Rp_bS6_RimK/Lys_biosynth_LsyX"/>
</dbReference>
<dbReference type="NCBIfam" id="NF007764">
    <property type="entry name" value="PRK10446.1"/>
    <property type="match status" value="1"/>
</dbReference>
<dbReference type="NCBIfam" id="TIGR00768">
    <property type="entry name" value="rimK_fam"/>
    <property type="match status" value="1"/>
</dbReference>
<dbReference type="PANTHER" id="PTHR21621:SF7">
    <property type="entry name" value="RIBOSOMAL PROTEIN BS6--L-GLUTAMATE LIGASE"/>
    <property type="match status" value="1"/>
</dbReference>
<dbReference type="PANTHER" id="PTHR21621">
    <property type="entry name" value="RIBOSOMAL PROTEIN S6 MODIFICATION PROTEIN"/>
    <property type="match status" value="1"/>
</dbReference>
<dbReference type="Pfam" id="PF08443">
    <property type="entry name" value="RimK"/>
    <property type="match status" value="1"/>
</dbReference>
<dbReference type="Pfam" id="PF18030">
    <property type="entry name" value="Rimk_N"/>
    <property type="match status" value="1"/>
</dbReference>
<dbReference type="SUPFAM" id="SSF56059">
    <property type="entry name" value="Glutathione synthetase ATP-binding domain-like"/>
    <property type="match status" value="1"/>
</dbReference>
<dbReference type="PROSITE" id="PS50975">
    <property type="entry name" value="ATP_GRASP"/>
    <property type="match status" value="1"/>
</dbReference>
<proteinExistence type="inferred from homology"/>
<gene>
    <name evidence="1" type="primary">rimK2</name>
    <name type="ordered locus">Sbal_2391</name>
</gene>
<accession>A3D571</accession>
<feature type="chain" id="PRO_0000340549" description="Probable alpha-L-glutamate ligase 2">
    <location>
        <begin position="1"/>
        <end position="301"/>
    </location>
</feature>
<feature type="domain" description="ATP-grasp" evidence="1">
    <location>
        <begin position="104"/>
        <end position="287"/>
    </location>
</feature>
<feature type="binding site" evidence="1">
    <location>
        <position position="141"/>
    </location>
    <ligand>
        <name>ATP</name>
        <dbReference type="ChEBI" id="CHEBI:30616"/>
    </ligand>
</feature>
<feature type="binding site" evidence="1">
    <location>
        <begin position="178"/>
        <end position="179"/>
    </location>
    <ligand>
        <name>ATP</name>
        <dbReference type="ChEBI" id="CHEBI:30616"/>
    </ligand>
</feature>
<feature type="binding site" evidence="1">
    <location>
        <position position="187"/>
    </location>
    <ligand>
        <name>ATP</name>
        <dbReference type="ChEBI" id="CHEBI:30616"/>
    </ligand>
</feature>
<feature type="binding site" evidence="1">
    <location>
        <begin position="211"/>
        <end position="213"/>
    </location>
    <ligand>
        <name>ATP</name>
        <dbReference type="ChEBI" id="CHEBI:30616"/>
    </ligand>
</feature>
<feature type="binding site" evidence="1">
    <location>
        <position position="248"/>
    </location>
    <ligand>
        <name>Mg(2+)</name>
        <dbReference type="ChEBI" id="CHEBI:18420"/>
        <label>1</label>
    </ligand>
</feature>
<feature type="binding site" evidence="1">
    <location>
        <position position="248"/>
    </location>
    <ligand>
        <name>Mn(2+)</name>
        <dbReference type="ChEBI" id="CHEBI:29035"/>
        <label>1</label>
    </ligand>
</feature>
<feature type="binding site" evidence="1">
    <location>
        <position position="260"/>
    </location>
    <ligand>
        <name>Mg(2+)</name>
        <dbReference type="ChEBI" id="CHEBI:18420"/>
        <label>1</label>
    </ligand>
</feature>
<feature type="binding site" evidence="1">
    <location>
        <position position="260"/>
    </location>
    <ligand>
        <name>Mg(2+)</name>
        <dbReference type="ChEBI" id="CHEBI:18420"/>
        <label>2</label>
    </ligand>
</feature>
<feature type="binding site" evidence="1">
    <location>
        <position position="260"/>
    </location>
    <ligand>
        <name>Mn(2+)</name>
        <dbReference type="ChEBI" id="CHEBI:29035"/>
        <label>1</label>
    </ligand>
</feature>
<feature type="binding site" evidence="1">
    <location>
        <position position="260"/>
    </location>
    <ligand>
        <name>Mn(2+)</name>
        <dbReference type="ChEBI" id="CHEBI:29035"/>
        <label>2</label>
    </ligand>
</feature>
<feature type="binding site" evidence="1">
    <location>
        <position position="262"/>
    </location>
    <ligand>
        <name>Mg(2+)</name>
        <dbReference type="ChEBI" id="CHEBI:18420"/>
        <label>2</label>
    </ligand>
</feature>
<feature type="binding site" evidence="1">
    <location>
        <position position="262"/>
    </location>
    <ligand>
        <name>Mn(2+)</name>
        <dbReference type="ChEBI" id="CHEBI:29035"/>
        <label>2</label>
    </ligand>
</feature>
<name>RIMK2_SHEB5</name>
<sequence>MRIAILSQGPELYSTKRLVEAAQLRGHEVHVINPLECYMNINMRQSSIHIGGRELPAFDAVIPRIGASITFYGSAVLRQFEMMGVYALNDSVGISRSRDKLRSMQLMSRRGIGLPITGFANKPSDIPDLIDMVGGAPLVIKLLEGTQGIGVVLAETRKAAESVIEAFMGLKANIMVQEYIKEANGADIRCFVLGDKVIAAMKRQAMPGEFRSNLHRGGTASLVKLTPEERSVAIRAAKTMGLNVAGVDLLRSNHGPVIMEVNSSPGLEGIEGATTKDVAGAIIDFVEKNAIKVKKVTQAQG</sequence>
<protein>
    <recommendedName>
        <fullName evidence="1">Probable alpha-L-glutamate ligase 2</fullName>
        <ecNumber evidence="1">6.3.2.-</ecNumber>
    </recommendedName>
</protein>